<proteinExistence type="inferred from homology"/>
<gene>
    <name type="primary">pyk</name>
    <name type="ordered locus">SSP1069</name>
</gene>
<comment type="catalytic activity">
    <reaction>
        <text>pyruvate + ATP = phosphoenolpyruvate + ADP + H(+)</text>
        <dbReference type="Rhea" id="RHEA:18157"/>
        <dbReference type="ChEBI" id="CHEBI:15361"/>
        <dbReference type="ChEBI" id="CHEBI:15378"/>
        <dbReference type="ChEBI" id="CHEBI:30616"/>
        <dbReference type="ChEBI" id="CHEBI:58702"/>
        <dbReference type="ChEBI" id="CHEBI:456216"/>
        <dbReference type="EC" id="2.7.1.40"/>
    </reaction>
</comment>
<comment type="cofactor">
    <cofactor evidence="1">
        <name>Mg(2+)</name>
        <dbReference type="ChEBI" id="CHEBI:18420"/>
    </cofactor>
</comment>
<comment type="cofactor">
    <cofactor evidence="1">
        <name>K(+)</name>
        <dbReference type="ChEBI" id="CHEBI:29103"/>
    </cofactor>
</comment>
<comment type="pathway">
    <text>Carbohydrate degradation; glycolysis; pyruvate from D-glyceraldehyde 3-phosphate: step 5/5.</text>
</comment>
<comment type="similarity">
    <text evidence="3">Belongs to the pyruvate kinase family.</text>
</comment>
<comment type="similarity">
    <text evidence="3">In the C-terminal section; belongs to the PEP-utilizing enzyme family.</text>
</comment>
<keyword id="KW-0067">ATP-binding</keyword>
<keyword id="KW-0324">Glycolysis</keyword>
<keyword id="KW-0418">Kinase</keyword>
<keyword id="KW-0460">Magnesium</keyword>
<keyword id="KW-0479">Metal-binding</keyword>
<keyword id="KW-0547">Nucleotide-binding</keyword>
<keyword id="KW-0630">Potassium</keyword>
<keyword id="KW-0670">Pyruvate</keyword>
<keyword id="KW-1185">Reference proteome</keyword>
<keyword id="KW-0808">Transferase</keyword>
<name>KPYK_STAS1</name>
<accession>Q49YC7</accession>
<sequence>MRKTKIVCTIGPASESEEMLEKLIKAGMNVARLNFSHGDQAEHKARIDTIRKVSKRLGKTVAILLDTKGPEIRTHNMKDGLIELEKGSEVTVSMTEVEGTPEKFSVTYENLINDVEEGSYILLDDGLIELQVKSIDKANGEVLCDVLNTGELKNKKGVNLPGVKVSLPGITDKDADDINFGISEGVDFIAASFVRRPSDVLDIRKLLEAKQNKNISIIPKIENQEGIDNIKEILEVSDGLMVARGDMGVEIPPESVPMVQKDLIRQCNKLGKPVITATQMLDSMQRNPRATRAEASDVANAIYDGTDAVMLSGETAAGQYPEEAVKTMRNIAVSAEAAQDYKKLLSDRTKLVETSLVNAIGVSVAHTALNLNVKAIVAATESGSTARTISKYRPQSDIIAVTPNAETARQCALVWGIFPVVKEGRKTTDALLNNAVATAVETERVQNGDLIIITAGVPTGEKGTTNMMKLHLVGDELAKGQGIGRSSVVGKTLVVKDASELEGKDLSESIIVTSSVDETLVPYIENAIGLITEENGITSPSAIIGLEKGIPTVVGVENATSEIQSDVLITVDANQGKIFEGYANVL</sequence>
<protein>
    <recommendedName>
        <fullName>Pyruvate kinase</fullName>
        <shortName>PK</shortName>
        <ecNumber>2.7.1.40</ecNumber>
    </recommendedName>
</protein>
<feature type="chain" id="PRO_0000294140" description="Pyruvate kinase">
    <location>
        <begin position="1"/>
        <end position="586"/>
    </location>
</feature>
<feature type="binding site" evidence="1">
    <location>
        <position position="32"/>
    </location>
    <ligand>
        <name>substrate</name>
    </ligand>
</feature>
<feature type="binding site" evidence="2">
    <location>
        <begin position="34"/>
        <end position="37"/>
    </location>
    <ligand>
        <name>ATP</name>
        <dbReference type="ChEBI" id="CHEBI:30616"/>
    </ligand>
</feature>
<feature type="binding site" evidence="1">
    <location>
        <position position="34"/>
    </location>
    <ligand>
        <name>K(+)</name>
        <dbReference type="ChEBI" id="CHEBI:29103"/>
    </ligand>
</feature>
<feature type="binding site" evidence="1">
    <location>
        <position position="36"/>
    </location>
    <ligand>
        <name>K(+)</name>
        <dbReference type="ChEBI" id="CHEBI:29103"/>
    </ligand>
</feature>
<feature type="binding site" evidence="1">
    <location>
        <position position="66"/>
    </location>
    <ligand>
        <name>K(+)</name>
        <dbReference type="ChEBI" id="CHEBI:29103"/>
    </ligand>
</feature>
<feature type="binding site" evidence="1">
    <location>
        <position position="67"/>
    </location>
    <ligand>
        <name>K(+)</name>
        <dbReference type="ChEBI" id="CHEBI:29103"/>
    </ligand>
</feature>
<feature type="binding site" evidence="2">
    <location>
        <position position="73"/>
    </location>
    <ligand>
        <name>ATP</name>
        <dbReference type="ChEBI" id="CHEBI:30616"/>
    </ligand>
</feature>
<feature type="binding site" evidence="2">
    <location>
        <position position="156"/>
    </location>
    <ligand>
        <name>ATP</name>
        <dbReference type="ChEBI" id="CHEBI:30616"/>
    </ligand>
</feature>
<feature type="binding site" evidence="1">
    <location>
        <position position="222"/>
    </location>
    <ligand>
        <name>Mg(2+)</name>
        <dbReference type="ChEBI" id="CHEBI:18420"/>
    </ligand>
</feature>
<feature type="binding site" evidence="1">
    <location>
        <position position="245"/>
    </location>
    <ligand>
        <name>substrate</name>
    </ligand>
</feature>
<feature type="binding site" evidence="1">
    <location>
        <position position="246"/>
    </location>
    <ligand>
        <name>Mg(2+)</name>
        <dbReference type="ChEBI" id="CHEBI:18420"/>
    </ligand>
</feature>
<feature type="binding site" evidence="1">
    <location>
        <position position="246"/>
    </location>
    <ligand>
        <name>substrate</name>
    </ligand>
</feature>
<feature type="binding site" evidence="1">
    <location>
        <position position="278"/>
    </location>
    <ligand>
        <name>substrate</name>
    </ligand>
</feature>
<feature type="site" description="Transition state stabilizer" evidence="1">
    <location>
        <position position="220"/>
    </location>
</feature>
<organism>
    <name type="scientific">Staphylococcus saprophyticus subsp. saprophyticus (strain ATCC 15305 / DSM 20229 / NCIMB 8711 / NCTC 7292 / S-41)</name>
    <dbReference type="NCBI Taxonomy" id="342451"/>
    <lineage>
        <taxon>Bacteria</taxon>
        <taxon>Bacillati</taxon>
        <taxon>Bacillota</taxon>
        <taxon>Bacilli</taxon>
        <taxon>Bacillales</taxon>
        <taxon>Staphylococcaceae</taxon>
        <taxon>Staphylococcus</taxon>
    </lineage>
</organism>
<reference key="1">
    <citation type="journal article" date="2005" name="Proc. Natl. Acad. Sci. U.S.A.">
        <title>Whole genome sequence of Staphylococcus saprophyticus reveals the pathogenesis of uncomplicated urinary tract infection.</title>
        <authorList>
            <person name="Kuroda M."/>
            <person name="Yamashita A."/>
            <person name="Hirakawa H."/>
            <person name="Kumano M."/>
            <person name="Morikawa K."/>
            <person name="Higashide M."/>
            <person name="Maruyama A."/>
            <person name="Inose Y."/>
            <person name="Matoba K."/>
            <person name="Toh H."/>
            <person name="Kuhara S."/>
            <person name="Hattori M."/>
            <person name="Ohta T."/>
        </authorList>
    </citation>
    <scope>NUCLEOTIDE SEQUENCE [LARGE SCALE GENOMIC DNA]</scope>
    <source>
        <strain>ATCC 15305 / DSM 20229 / NCIMB 8711 / NCTC 7292 / S-41</strain>
    </source>
</reference>
<dbReference type="EC" id="2.7.1.40"/>
<dbReference type="EMBL" id="AP008934">
    <property type="protein sequence ID" value="BAE18214.1"/>
    <property type="molecule type" value="Genomic_DNA"/>
</dbReference>
<dbReference type="RefSeq" id="WP_011302911.1">
    <property type="nucleotide sequence ID" value="NC_007350.1"/>
</dbReference>
<dbReference type="SMR" id="Q49YC7"/>
<dbReference type="GeneID" id="3615437"/>
<dbReference type="KEGG" id="ssp:SSP1069"/>
<dbReference type="PATRIC" id="fig|342451.11.peg.1068"/>
<dbReference type="eggNOG" id="COG0469">
    <property type="taxonomic scope" value="Bacteria"/>
</dbReference>
<dbReference type="HOGENOM" id="CLU_015439_0_2_9"/>
<dbReference type="OrthoDB" id="9812123at2"/>
<dbReference type="UniPathway" id="UPA00109">
    <property type="reaction ID" value="UER00188"/>
</dbReference>
<dbReference type="Proteomes" id="UP000006371">
    <property type="component" value="Chromosome"/>
</dbReference>
<dbReference type="GO" id="GO:0005524">
    <property type="term" value="F:ATP binding"/>
    <property type="evidence" value="ECO:0007669"/>
    <property type="project" value="UniProtKB-KW"/>
</dbReference>
<dbReference type="GO" id="GO:0016301">
    <property type="term" value="F:kinase activity"/>
    <property type="evidence" value="ECO:0007669"/>
    <property type="project" value="UniProtKB-KW"/>
</dbReference>
<dbReference type="GO" id="GO:0000287">
    <property type="term" value="F:magnesium ion binding"/>
    <property type="evidence" value="ECO:0007669"/>
    <property type="project" value="InterPro"/>
</dbReference>
<dbReference type="GO" id="GO:0030955">
    <property type="term" value="F:potassium ion binding"/>
    <property type="evidence" value="ECO:0007669"/>
    <property type="project" value="InterPro"/>
</dbReference>
<dbReference type="GO" id="GO:0004743">
    <property type="term" value="F:pyruvate kinase activity"/>
    <property type="evidence" value="ECO:0007669"/>
    <property type="project" value="UniProtKB-EC"/>
</dbReference>
<dbReference type="FunFam" id="2.40.33.10:FF:000001">
    <property type="entry name" value="Pyruvate kinase"/>
    <property type="match status" value="1"/>
</dbReference>
<dbReference type="FunFam" id="3.20.20.60:FF:000001">
    <property type="entry name" value="Pyruvate kinase"/>
    <property type="match status" value="1"/>
</dbReference>
<dbReference type="Gene3D" id="3.20.20.60">
    <property type="entry name" value="Phosphoenolpyruvate-binding domains"/>
    <property type="match status" value="1"/>
</dbReference>
<dbReference type="Gene3D" id="3.50.30.10">
    <property type="entry name" value="Phosphohistidine domain"/>
    <property type="match status" value="1"/>
</dbReference>
<dbReference type="Gene3D" id="2.40.33.10">
    <property type="entry name" value="PK beta-barrel domain-like"/>
    <property type="match status" value="1"/>
</dbReference>
<dbReference type="Gene3D" id="3.40.1380.20">
    <property type="entry name" value="Pyruvate kinase, C-terminal domain"/>
    <property type="match status" value="1"/>
</dbReference>
<dbReference type="InterPro" id="IPR008279">
    <property type="entry name" value="PEP-util_enz_mobile_dom"/>
</dbReference>
<dbReference type="InterPro" id="IPR036637">
    <property type="entry name" value="Phosphohistidine_dom_sf"/>
</dbReference>
<dbReference type="InterPro" id="IPR001697">
    <property type="entry name" value="Pyr_Knase"/>
</dbReference>
<dbReference type="InterPro" id="IPR015813">
    <property type="entry name" value="Pyrv/PenolPyrv_kinase-like_dom"/>
</dbReference>
<dbReference type="InterPro" id="IPR040442">
    <property type="entry name" value="Pyrv_kinase-like_dom_sf"/>
</dbReference>
<dbReference type="InterPro" id="IPR011037">
    <property type="entry name" value="Pyrv_Knase-like_insert_dom_sf"/>
</dbReference>
<dbReference type="InterPro" id="IPR018209">
    <property type="entry name" value="Pyrv_Knase_AS"/>
</dbReference>
<dbReference type="InterPro" id="IPR015793">
    <property type="entry name" value="Pyrv_Knase_brl"/>
</dbReference>
<dbReference type="InterPro" id="IPR015795">
    <property type="entry name" value="Pyrv_Knase_C"/>
</dbReference>
<dbReference type="InterPro" id="IPR036918">
    <property type="entry name" value="Pyrv_Knase_C_sf"/>
</dbReference>
<dbReference type="InterPro" id="IPR015806">
    <property type="entry name" value="Pyrv_Knase_insert_dom_sf"/>
</dbReference>
<dbReference type="NCBIfam" id="NF004491">
    <property type="entry name" value="PRK05826.1"/>
    <property type="match status" value="1"/>
</dbReference>
<dbReference type="NCBIfam" id="NF004978">
    <property type="entry name" value="PRK06354.1"/>
    <property type="match status" value="1"/>
</dbReference>
<dbReference type="NCBIfam" id="TIGR01064">
    <property type="entry name" value="pyruv_kin"/>
    <property type="match status" value="1"/>
</dbReference>
<dbReference type="PANTHER" id="PTHR11817">
    <property type="entry name" value="PYRUVATE KINASE"/>
    <property type="match status" value="1"/>
</dbReference>
<dbReference type="Pfam" id="PF00391">
    <property type="entry name" value="PEP-utilizers"/>
    <property type="match status" value="1"/>
</dbReference>
<dbReference type="Pfam" id="PF00224">
    <property type="entry name" value="PK"/>
    <property type="match status" value="1"/>
</dbReference>
<dbReference type="Pfam" id="PF02887">
    <property type="entry name" value="PK_C"/>
    <property type="match status" value="1"/>
</dbReference>
<dbReference type="PRINTS" id="PR01050">
    <property type="entry name" value="PYRUVTKNASE"/>
</dbReference>
<dbReference type="SUPFAM" id="SSF51621">
    <property type="entry name" value="Phosphoenolpyruvate/pyruvate domain"/>
    <property type="match status" value="1"/>
</dbReference>
<dbReference type="SUPFAM" id="SSF52009">
    <property type="entry name" value="Phosphohistidine domain"/>
    <property type="match status" value="1"/>
</dbReference>
<dbReference type="SUPFAM" id="SSF50800">
    <property type="entry name" value="PK beta-barrel domain-like"/>
    <property type="match status" value="1"/>
</dbReference>
<dbReference type="SUPFAM" id="SSF52935">
    <property type="entry name" value="PK C-terminal domain-like"/>
    <property type="match status" value="1"/>
</dbReference>
<dbReference type="PROSITE" id="PS00110">
    <property type="entry name" value="PYRUVATE_KINASE"/>
    <property type="match status" value="1"/>
</dbReference>
<evidence type="ECO:0000250" key="1"/>
<evidence type="ECO:0000250" key="2">
    <source>
        <dbReference type="UniProtKB" id="P14618"/>
    </source>
</evidence>
<evidence type="ECO:0000305" key="3"/>